<organism>
    <name type="scientific">Glycine max</name>
    <name type="common">Soybean</name>
    <name type="synonym">Glycine hispida</name>
    <dbReference type="NCBI Taxonomy" id="3847"/>
    <lineage>
        <taxon>Eukaryota</taxon>
        <taxon>Viridiplantae</taxon>
        <taxon>Streptophyta</taxon>
        <taxon>Embryophyta</taxon>
        <taxon>Tracheophyta</taxon>
        <taxon>Spermatophyta</taxon>
        <taxon>Magnoliopsida</taxon>
        <taxon>eudicotyledons</taxon>
        <taxon>Gunneridae</taxon>
        <taxon>Pentapetalae</taxon>
        <taxon>rosids</taxon>
        <taxon>fabids</taxon>
        <taxon>Fabales</taxon>
        <taxon>Fabaceae</taxon>
        <taxon>Papilionoideae</taxon>
        <taxon>50 kb inversion clade</taxon>
        <taxon>NPAAA clade</taxon>
        <taxon>indigoferoid/millettioid clade</taxon>
        <taxon>Phaseoleae</taxon>
        <taxon>Glycine</taxon>
        <taxon>Glycine subgen. Soja</taxon>
    </lineage>
</organism>
<protein>
    <recommendedName>
        <fullName evidence="2">Photosystem II reaction center protein H</fullName>
        <shortName evidence="2">PSII-H</shortName>
    </recommendedName>
    <alternativeName>
        <fullName evidence="2">Photosystem II 10 kDa phosphoprotein</fullName>
    </alternativeName>
</protein>
<gene>
    <name evidence="2" type="primary">psbH</name>
</gene>
<proteinExistence type="inferred from homology"/>
<sequence length="73" mass="7843">MATQTVEDNSRSGPRRTVVGDLLKPLNSEYGKVAPGWGTTPLMGVAMALFAIFLSIILEIYNSSILLDGISMN</sequence>
<keyword id="KW-0150">Chloroplast</keyword>
<keyword id="KW-0472">Membrane</keyword>
<keyword id="KW-0597">Phosphoprotein</keyword>
<keyword id="KW-0602">Photosynthesis</keyword>
<keyword id="KW-0604">Photosystem II</keyword>
<keyword id="KW-0934">Plastid</keyword>
<keyword id="KW-1185">Reference proteome</keyword>
<keyword id="KW-0793">Thylakoid</keyword>
<keyword id="KW-0812">Transmembrane</keyword>
<keyword id="KW-1133">Transmembrane helix</keyword>
<feature type="initiator methionine" description="Removed" evidence="1">
    <location>
        <position position="1"/>
    </location>
</feature>
<feature type="chain" id="PRO_0000275754" description="Photosystem II reaction center protein H">
    <location>
        <begin position="2"/>
        <end position="73"/>
    </location>
</feature>
<feature type="transmembrane region" description="Helical" evidence="2">
    <location>
        <begin position="41"/>
        <end position="61"/>
    </location>
</feature>
<feature type="modified residue" description="Phosphothreonine" evidence="2">
    <location>
        <position position="3"/>
    </location>
</feature>
<feature type="modified residue" description="Phosphothreonine" evidence="2">
    <location>
        <position position="5"/>
    </location>
</feature>
<name>PSBH_SOYBN</name>
<reference key="1">
    <citation type="journal article" date="2005" name="Plant Mol. Biol.">
        <title>Complete chloroplast genome sequence of Glycine max and comparative analyses with other legume genomes.</title>
        <authorList>
            <person name="Saski C."/>
            <person name="Lee S.-B."/>
            <person name="Daniell H."/>
            <person name="Wood T.C."/>
            <person name="Tomkins J."/>
            <person name="Kim H.-G."/>
            <person name="Jansen R.K."/>
        </authorList>
    </citation>
    <scope>NUCLEOTIDE SEQUENCE [LARGE SCALE GENOMIC DNA]</scope>
    <source>
        <strain>cv. PI 437654</strain>
    </source>
</reference>
<accession>Q2PMQ6</accession>
<dbReference type="EMBL" id="DQ317523">
    <property type="protein sequence ID" value="ABC25152.1"/>
    <property type="molecule type" value="Genomic_DNA"/>
</dbReference>
<dbReference type="RefSeq" id="YP_538794.1">
    <property type="nucleotide sequence ID" value="NC_007942.1"/>
</dbReference>
<dbReference type="SMR" id="Q2PMQ6"/>
<dbReference type="FunCoup" id="Q2PMQ6">
    <property type="interactions" value="687"/>
</dbReference>
<dbReference type="STRING" id="3847.Q2PMQ6"/>
<dbReference type="PaxDb" id="3847-GLYMA17G23881.1"/>
<dbReference type="GeneID" id="3989326"/>
<dbReference type="KEGG" id="gmx:3989326"/>
<dbReference type="eggNOG" id="ENOG502S8Y7">
    <property type="taxonomic scope" value="Eukaryota"/>
</dbReference>
<dbReference type="InParanoid" id="Q2PMQ6"/>
<dbReference type="Proteomes" id="UP000008827">
    <property type="component" value="Chloroplast"/>
</dbReference>
<dbReference type="GO" id="GO:0009535">
    <property type="term" value="C:chloroplast thylakoid membrane"/>
    <property type="evidence" value="ECO:0007669"/>
    <property type="project" value="UniProtKB-SubCell"/>
</dbReference>
<dbReference type="GO" id="GO:0009523">
    <property type="term" value="C:photosystem II"/>
    <property type="evidence" value="ECO:0007669"/>
    <property type="project" value="UniProtKB-KW"/>
</dbReference>
<dbReference type="GO" id="GO:0042301">
    <property type="term" value="F:phosphate ion binding"/>
    <property type="evidence" value="ECO:0007669"/>
    <property type="project" value="InterPro"/>
</dbReference>
<dbReference type="GO" id="GO:0015979">
    <property type="term" value="P:photosynthesis"/>
    <property type="evidence" value="ECO:0007669"/>
    <property type="project" value="UniProtKB-UniRule"/>
</dbReference>
<dbReference type="GO" id="GO:0050821">
    <property type="term" value="P:protein stabilization"/>
    <property type="evidence" value="ECO:0007669"/>
    <property type="project" value="InterPro"/>
</dbReference>
<dbReference type="FunFam" id="1.20.5.880:FF:000001">
    <property type="entry name" value="Photosystem II reaction center protein H"/>
    <property type="match status" value="1"/>
</dbReference>
<dbReference type="Gene3D" id="1.20.5.880">
    <property type="entry name" value="Photosystem II reaction center protein H"/>
    <property type="match status" value="1"/>
</dbReference>
<dbReference type="HAMAP" id="MF_00752">
    <property type="entry name" value="PSII_PsbH"/>
    <property type="match status" value="1"/>
</dbReference>
<dbReference type="InterPro" id="IPR001056">
    <property type="entry name" value="PSII_PsbH"/>
</dbReference>
<dbReference type="InterPro" id="IPR036863">
    <property type="entry name" value="PSII_PsbH_sf"/>
</dbReference>
<dbReference type="NCBIfam" id="NF002728">
    <property type="entry name" value="PRK02624.1"/>
    <property type="match status" value="1"/>
</dbReference>
<dbReference type="PANTHER" id="PTHR34469">
    <property type="entry name" value="PHOTOSYSTEM II REACTION CENTER PROTEIN H"/>
    <property type="match status" value="1"/>
</dbReference>
<dbReference type="PANTHER" id="PTHR34469:SF4">
    <property type="entry name" value="PHOTOSYSTEM II REACTION CENTER PROTEIN H"/>
    <property type="match status" value="1"/>
</dbReference>
<dbReference type="Pfam" id="PF00737">
    <property type="entry name" value="PsbH"/>
    <property type="match status" value="1"/>
</dbReference>
<dbReference type="SUPFAM" id="SSF161025">
    <property type="entry name" value="Photosystem II 10 kDa phosphoprotein PsbH"/>
    <property type="match status" value="1"/>
</dbReference>
<comment type="function">
    <text evidence="2">One of the components of the core complex of photosystem II (PSII), required for its stability and/or assembly. PSII is a light-driven water:plastoquinone oxidoreductase that uses light energy to abstract electrons from H(2)O, generating O(2) and a proton gradient subsequently used for ATP formation. It consists of a core antenna complex that captures photons, and an electron transfer chain that converts photonic excitation into a charge separation.</text>
</comment>
<comment type="subunit">
    <text evidence="2">PSII is composed of 1 copy each of membrane proteins PsbA, PsbB, PsbC, PsbD, PsbE, PsbF, PsbH, PsbI, PsbJ, PsbK, PsbL, PsbM, PsbT, PsbX, PsbY, PsbZ, Psb30/Ycf12, at least 3 peripheral proteins of the oxygen-evolving complex and a large number of cofactors. It forms dimeric complexes.</text>
</comment>
<comment type="subcellular location">
    <subcellularLocation>
        <location evidence="2">Plastid</location>
        <location evidence="2">Chloroplast thylakoid membrane</location>
        <topology evidence="2">Single-pass membrane protein</topology>
    </subcellularLocation>
</comment>
<comment type="PTM">
    <text evidence="2">Phosphorylation is a light-dependent reaction catalyzed by a membrane-bound kinase; phosphorylation occurs on Thr residue(s) in the N-terminus of the protein.</text>
</comment>
<comment type="similarity">
    <text evidence="2">Belongs to the PsbH family.</text>
</comment>
<geneLocation type="chloroplast"/>
<evidence type="ECO:0000250" key="1">
    <source>
        <dbReference type="UniProtKB" id="P56780"/>
    </source>
</evidence>
<evidence type="ECO:0000255" key="2">
    <source>
        <dbReference type="HAMAP-Rule" id="MF_00752"/>
    </source>
</evidence>